<proteinExistence type="inferred from homology"/>
<protein>
    <recommendedName>
        <fullName evidence="2">Protein kintoun</fullName>
    </recommendedName>
    <alternativeName>
        <fullName evidence="2">Dynein assembly factor 2, axonemal homolog</fullName>
    </alternativeName>
    <alternativeName>
        <fullName evidence="2">PP1-interacting protein 20</fullName>
    </alternativeName>
</protein>
<sequence>MSAGSRNKHSKFRNDDQLDISKEEFSRIKEALGNEEFRKLFFDYVDEIQDPANRKIYEEEITQLEKERGVEVRFIHPQPGFVVKTSLDGELKCFINIASSPEIEAPHNEVATNPENGNRGLSWYIPMAQTSSRDDADAKNNHCKVFDVVFHPDALHLAKRNSQFRKCLVDTALDAVEREYQVSLDRANLKFPKLDYKGIARPTVIRKLAENPTAEQLEPHPLQNIYPTAPPTSNPEPRVHPMKTKAAPVPEFTIPRYSIKHSHDVDLSEYTDELDAKLHVTVPRNLVVEIELPLLRSTAECQLDVTSKSVYLLSEKPGAKYRLKMDLPFTVDDKAGSARFDTDLRRLSITLPVVRSSVPQQRDMHDTLRHFSREDSGVELHSNSESPVEEEEADADLSDSKADTSETVTPTATPVHSAPTPFLKKSVHYQLPAKFDCNVLDNVMAFVLHVANVQPDSIEQLREQRSLHIQFATIGSGYYPTHYAFYVELPADEEGGSAIENVEAEAWDNNVVLKLCLSSQSKSPIRYMAGLDATDLNEYPVHGQYTVKPKRRDAQNKESAPLDVKFDHNKESLEVTIRPVPSATEEDEVEEQHEESHEEHQQHAQNKKPSKKQRKRNKKERSLSESACEDIVQEQHAENPAPPAKNFLKLPQRKQRSYSECNDSSVGSGASQRGILKRFSRYGPRPSMSDSCSSIDDYSSSYSCSVDASGASLFSQSFGGIPEEDRSDAGLSESCKKTVRFNDHITKQVFRLDSSILGQRKKNQKRRDLKLRAQQRRLSEGDSVDYEESRGDALKPQGKASNKGNKLHDSGLDLTGTAAGHGSHSDADAKNAMMFEMDEDDVM</sequence>
<feature type="chain" id="PRO_0000365804" description="Protein kintoun">
    <location>
        <begin position="1"/>
        <end position="843"/>
    </location>
</feature>
<feature type="region of interest" description="Disordered" evidence="3">
    <location>
        <begin position="212"/>
        <end position="242"/>
    </location>
</feature>
<feature type="region of interest" description="Disordered" evidence="3">
    <location>
        <begin position="371"/>
        <end position="417"/>
    </location>
</feature>
<feature type="region of interest" description="Disordered" evidence="3">
    <location>
        <begin position="545"/>
        <end position="672"/>
    </location>
</feature>
<feature type="region of interest" description="Disordered" evidence="3">
    <location>
        <begin position="761"/>
        <end position="843"/>
    </location>
</feature>
<feature type="compositionally biased region" description="Acidic residues" evidence="3">
    <location>
        <begin position="387"/>
        <end position="397"/>
    </location>
</feature>
<feature type="compositionally biased region" description="Basic and acidic residues" evidence="3">
    <location>
        <begin position="564"/>
        <end position="573"/>
    </location>
</feature>
<feature type="compositionally biased region" description="Acidic residues" evidence="3">
    <location>
        <begin position="584"/>
        <end position="593"/>
    </location>
</feature>
<feature type="compositionally biased region" description="Basic residues" evidence="3">
    <location>
        <begin position="605"/>
        <end position="619"/>
    </location>
</feature>
<feature type="compositionally biased region" description="Polar residues" evidence="3">
    <location>
        <begin position="658"/>
        <end position="671"/>
    </location>
</feature>
<feature type="compositionally biased region" description="Basic residues" evidence="3">
    <location>
        <begin position="761"/>
        <end position="775"/>
    </location>
</feature>
<feature type="modified residue" description="Phosphoserine" evidence="1">
    <location>
        <position position="376"/>
    </location>
</feature>
<feature type="modified residue" description="Phosphoserine" evidence="1">
    <location>
        <position position="779"/>
    </location>
</feature>
<comment type="function">
    <text evidence="2">Required for cytoplasmic pre-assembly of axonemal dyneins, thereby playing a central role in motility in cilia and flagella. Involved in pre-assembly of dynein arm complexes in the cytoplasm before intraflagellar transport loads them for the ciliary compartment.</text>
</comment>
<comment type="subunit">
    <text evidence="2">Interacts with Pp1alpha-96A, Pp1-87B, Pp1-13C and flw.</text>
</comment>
<comment type="subcellular location">
    <subcellularLocation>
        <location evidence="2">Cytoplasm</location>
    </subcellularLocation>
</comment>
<comment type="similarity">
    <text evidence="2">Belongs to the PIH1 family. Kintoun subfamily.</text>
</comment>
<evidence type="ECO:0000250" key="1">
    <source>
        <dbReference type="UniProtKB" id="Q0E9G3"/>
    </source>
</evidence>
<evidence type="ECO:0000255" key="2">
    <source>
        <dbReference type="HAMAP-Rule" id="MF_03069"/>
    </source>
</evidence>
<evidence type="ECO:0000256" key="3">
    <source>
        <dbReference type="SAM" id="MobiDB-lite"/>
    </source>
</evidence>
<accession>B3MG50</accession>
<keyword id="KW-0963">Cytoplasm</keyword>
<keyword id="KW-0597">Phosphoprotein</keyword>
<keyword id="KW-1185">Reference proteome</keyword>
<gene>
    <name evidence="2" type="primary">Nop17l</name>
    <name evidence="2" type="synonym">Ppi20</name>
    <name type="ORF">GF11794</name>
</gene>
<reference key="1">
    <citation type="journal article" date="2007" name="Nature">
        <title>Evolution of genes and genomes on the Drosophila phylogeny.</title>
        <authorList>
            <consortium name="Drosophila 12 genomes consortium"/>
        </authorList>
    </citation>
    <scope>NUCLEOTIDE SEQUENCE [LARGE SCALE GENOMIC DNA]</scope>
    <source>
        <strain>Tucson 14024-0371.13</strain>
    </source>
</reference>
<organism>
    <name type="scientific">Drosophila ananassae</name>
    <name type="common">Fruit fly</name>
    <dbReference type="NCBI Taxonomy" id="7217"/>
    <lineage>
        <taxon>Eukaryota</taxon>
        <taxon>Metazoa</taxon>
        <taxon>Ecdysozoa</taxon>
        <taxon>Arthropoda</taxon>
        <taxon>Hexapoda</taxon>
        <taxon>Insecta</taxon>
        <taxon>Pterygota</taxon>
        <taxon>Neoptera</taxon>
        <taxon>Endopterygota</taxon>
        <taxon>Diptera</taxon>
        <taxon>Brachycera</taxon>
        <taxon>Muscomorpha</taxon>
        <taxon>Ephydroidea</taxon>
        <taxon>Drosophilidae</taxon>
        <taxon>Drosophila</taxon>
        <taxon>Sophophora</taxon>
    </lineage>
</organism>
<dbReference type="EMBL" id="CH902619">
    <property type="protein sequence ID" value="EDV36745.1"/>
    <property type="molecule type" value="Genomic_DNA"/>
</dbReference>
<dbReference type="SMR" id="B3MG50"/>
<dbReference type="FunCoup" id="B3MG50">
    <property type="interactions" value="379"/>
</dbReference>
<dbReference type="STRING" id="7217.B3MG50"/>
<dbReference type="EnsemblMetazoa" id="FBtr0116494">
    <property type="protein sequence ID" value="FBpp0114986"/>
    <property type="gene ID" value="FBgn0088834"/>
</dbReference>
<dbReference type="EnsemblMetazoa" id="XM_001959887.4">
    <property type="protein sequence ID" value="XP_001959923.1"/>
    <property type="gene ID" value="LOC6494656"/>
</dbReference>
<dbReference type="EnsemblMetazoa" id="XM_032451373.2">
    <property type="protein sequence ID" value="XP_032307264.1"/>
    <property type="gene ID" value="LOC6494656"/>
</dbReference>
<dbReference type="GeneID" id="6494656"/>
<dbReference type="KEGG" id="dan:6494656"/>
<dbReference type="eggNOG" id="KOG4356">
    <property type="taxonomic scope" value="Eukaryota"/>
</dbReference>
<dbReference type="HOGENOM" id="CLU_012715_0_0_1"/>
<dbReference type="InParanoid" id="B3MG50"/>
<dbReference type="OMA" id="CFLNISK"/>
<dbReference type="OrthoDB" id="546764at2759"/>
<dbReference type="PhylomeDB" id="B3MG50"/>
<dbReference type="Proteomes" id="UP000007801">
    <property type="component" value="Unassembled WGS sequence"/>
</dbReference>
<dbReference type="GO" id="GO:0005737">
    <property type="term" value="C:cytoplasm"/>
    <property type="evidence" value="ECO:0007669"/>
    <property type="project" value="UniProtKB-SubCell"/>
</dbReference>
<dbReference type="GO" id="GO:0070286">
    <property type="term" value="P:axonemal dynein complex assembly"/>
    <property type="evidence" value="ECO:0007669"/>
    <property type="project" value="UniProtKB-UniRule"/>
</dbReference>
<dbReference type="GO" id="GO:0060285">
    <property type="term" value="P:cilium-dependent cell motility"/>
    <property type="evidence" value="ECO:0007669"/>
    <property type="project" value="UniProtKB-UniRule"/>
</dbReference>
<dbReference type="HAMAP" id="MF_03069">
    <property type="entry name" value="Kintoun"/>
    <property type="match status" value="1"/>
</dbReference>
<dbReference type="InterPro" id="IPR034727">
    <property type="entry name" value="Kintoun"/>
</dbReference>
<dbReference type="InterPro" id="IPR050734">
    <property type="entry name" value="PIH1/Kintoun_subfamily"/>
</dbReference>
<dbReference type="InterPro" id="IPR012981">
    <property type="entry name" value="PIH1_N"/>
</dbReference>
<dbReference type="InterPro" id="IPR041442">
    <property type="entry name" value="PIH1D1/2/3_CS-like"/>
</dbReference>
<dbReference type="PANTHER" id="PTHR22997">
    <property type="entry name" value="PIH1 DOMAIN-CONTAINING PROTEIN 1"/>
    <property type="match status" value="1"/>
</dbReference>
<dbReference type="PANTHER" id="PTHR22997:SF3">
    <property type="entry name" value="PROTEIN KINTOUN"/>
    <property type="match status" value="1"/>
</dbReference>
<dbReference type="Pfam" id="PF08190">
    <property type="entry name" value="PIH1"/>
    <property type="match status" value="1"/>
</dbReference>
<dbReference type="Pfam" id="PF18201">
    <property type="entry name" value="PIH1_CS"/>
    <property type="match status" value="1"/>
</dbReference>
<name>KTU_DROAN</name>